<comment type="function">
    <text evidence="1">Macrophage-specific antiporter that fluxes metal ions in either direction against a proton gradient. Localized to late endosomal lysosomal membranes, delivers bivalent cations from the cytosol into these acidic compartments where they may directly affect antimicrobial activity. Involved in iron metabolism and host natural resistance to infection with intracellular parasites. Pathogen resistance involves sequestration of Fe(2+) and Mn(2+), cofactors of both prokaryotic and eukaryotic catalases and superoxide dismutases, not only to protect the macrophage against its own generation of reactive oxygen species, but to deny the cations to the pathogen for synthesis of its protective enzymes.</text>
</comment>
<comment type="catalytic activity">
    <reaction evidence="1">
        <text>Zn(2+)(in) + H(+)(out) = Zn(2+)(out) + H(+)(in)</text>
        <dbReference type="Rhea" id="RHEA:28839"/>
        <dbReference type="ChEBI" id="CHEBI:15378"/>
        <dbReference type="ChEBI" id="CHEBI:29105"/>
    </reaction>
</comment>
<comment type="catalytic activity">
    <reaction evidence="1">
        <text>Fe(2+)(in) + H(+)(out) = Fe(2+)(out) + H(+)(in)</text>
        <dbReference type="Rhea" id="RHEA:29439"/>
        <dbReference type="ChEBI" id="CHEBI:15378"/>
        <dbReference type="ChEBI" id="CHEBI:29033"/>
    </reaction>
</comment>
<comment type="catalytic activity">
    <reaction evidence="1">
        <text>Mn(2+)(in) + H(+)(out) = Mn(2+)(out) + H(+)(in)</text>
        <dbReference type="Rhea" id="RHEA:73063"/>
        <dbReference type="ChEBI" id="CHEBI:15378"/>
        <dbReference type="ChEBI" id="CHEBI:29035"/>
    </reaction>
</comment>
<comment type="subcellular location">
    <subcellularLocation>
        <location evidence="1">Late endosome membrane</location>
        <topology evidence="2">Multi-pass membrane protein</topology>
    </subcellularLocation>
    <subcellularLocation>
        <location evidence="1">Lysosome membrane</location>
        <topology evidence="2">Multi-pass membrane protein</topology>
    </subcellularLocation>
</comment>
<comment type="similarity">
    <text evidence="4">Belongs to the NRAMP family.</text>
</comment>
<comment type="sequence caution" evidence="4">
    <conflict type="erroneous initiation">
        <sequence resource="EMBL-CDS" id="AAB49833"/>
    </conflict>
    <text>Truncated N-terminus.</text>
</comment>
<reference key="1">
    <citation type="journal article" date="2004" name="Genome Res.">
        <title>The status, quality, and expansion of the NIH full-length cDNA project: the Mammalian Gene Collection (MGC).</title>
        <authorList>
            <consortium name="The MGC Project Team"/>
        </authorList>
    </citation>
    <scope>NUCLEOTIDE SEQUENCE [LARGE SCALE MRNA]</scope>
    <source>
        <tissue>Prostate</tissue>
    </source>
</reference>
<reference key="2">
    <citation type="journal article" date="1996" name="Mamm. Genome">
        <title>Genomic cloning and genetic mapping of the rat Nramp1 (Bcg) gene on chromosome 9.</title>
        <authorList>
            <person name="Ge L."/>
            <person name="Remmers E.F."/>
            <person name="Du Y."/>
            <person name="Wilder R.L."/>
        </authorList>
    </citation>
    <scope>NUCLEOTIDE SEQUENCE [GENOMIC DNA] OF 336-507</scope>
    <source>
        <strain>Lewis</strain>
    </source>
</reference>
<protein>
    <recommendedName>
        <fullName>Natural resistance-associated macrophage protein 1</fullName>
        <shortName>NRAMP 1</shortName>
    </recommendedName>
    <alternativeName>
        <fullName>Solute carrier family 11 member 1</fullName>
    </alternativeName>
</protein>
<dbReference type="EMBL" id="BC100653">
    <property type="protein sequence ID" value="AAI00654.1"/>
    <property type="molecule type" value="mRNA"/>
</dbReference>
<dbReference type="EMBL" id="U53822">
    <property type="protein sequence ID" value="AAB49833.1"/>
    <property type="status" value="ALT_INIT"/>
    <property type="molecule type" value="Genomic_DNA"/>
</dbReference>
<dbReference type="RefSeq" id="NP_001026828.1">
    <property type="nucleotide sequence ID" value="NM_001031658.1"/>
</dbReference>
<dbReference type="SMR" id="P70553"/>
<dbReference type="FunCoup" id="P70553">
    <property type="interactions" value="147"/>
</dbReference>
<dbReference type="STRING" id="10116.ENSRNOP00000054282"/>
<dbReference type="GlyCosmos" id="P70553">
    <property type="glycosylation" value="2 sites, No reported glycans"/>
</dbReference>
<dbReference type="GlyGen" id="P70553">
    <property type="glycosylation" value="2 sites"/>
</dbReference>
<dbReference type="PhosphoSitePlus" id="P70553"/>
<dbReference type="PaxDb" id="10116-ENSRNOP00000054282"/>
<dbReference type="GeneID" id="316519"/>
<dbReference type="KEGG" id="rno:316519"/>
<dbReference type="UCSC" id="RGD:1601463">
    <property type="organism name" value="rat"/>
</dbReference>
<dbReference type="AGR" id="RGD:1601463"/>
<dbReference type="CTD" id="6556"/>
<dbReference type="RGD" id="1601463">
    <property type="gene designation" value="Slc11a1"/>
</dbReference>
<dbReference type="eggNOG" id="KOG1291">
    <property type="taxonomic scope" value="Eukaryota"/>
</dbReference>
<dbReference type="InParanoid" id="P70553"/>
<dbReference type="Reactome" id="R-RNO-1222556">
    <property type="pathway name" value="ROS and RNS production in phagocytes"/>
</dbReference>
<dbReference type="Reactome" id="R-RNO-425410">
    <property type="pathway name" value="Metal ion SLC transporters"/>
</dbReference>
<dbReference type="Reactome" id="R-RNO-6798695">
    <property type="pathway name" value="Neutrophil degranulation"/>
</dbReference>
<dbReference type="Reactome" id="R-RNO-6803544">
    <property type="pathway name" value="Ion influx/efflux at host-pathogen interface"/>
</dbReference>
<dbReference type="PRO" id="PR:P70553"/>
<dbReference type="Proteomes" id="UP000002494">
    <property type="component" value="Unplaced"/>
</dbReference>
<dbReference type="GO" id="GO:0010008">
    <property type="term" value="C:endosome membrane"/>
    <property type="evidence" value="ECO:0000266"/>
    <property type="project" value="RGD"/>
</dbReference>
<dbReference type="GO" id="GO:0005770">
    <property type="term" value="C:late endosome"/>
    <property type="evidence" value="ECO:0000266"/>
    <property type="project" value="RGD"/>
</dbReference>
<dbReference type="GO" id="GO:0031902">
    <property type="term" value="C:late endosome membrane"/>
    <property type="evidence" value="ECO:0000266"/>
    <property type="project" value="RGD"/>
</dbReference>
<dbReference type="GO" id="GO:0005765">
    <property type="term" value="C:lysosomal membrane"/>
    <property type="evidence" value="ECO:0000266"/>
    <property type="project" value="RGD"/>
</dbReference>
<dbReference type="GO" id="GO:0005764">
    <property type="term" value="C:lysosome"/>
    <property type="evidence" value="ECO:0000266"/>
    <property type="project" value="RGD"/>
</dbReference>
<dbReference type="GO" id="GO:0030670">
    <property type="term" value="C:phagocytic vesicle membrane"/>
    <property type="evidence" value="ECO:0000266"/>
    <property type="project" value="RGD"/>
</dbReference>
<dbReference type="GO" id="GO:0005886">
    <property type="term" value="C:plasma membrane"/>
    <property type="evidence" value="ECO:0000266"/>
    <property type="project" value="RGD"/>
</dbReference>
<dbReference type="GO" id="GO:0070821">
    <property type="term" value="C:tertiary granule membrane"/>
    <property type="evidence" value="ECO:0000266"/>
    <property type="project" value="RGD"/>
</dbReference>
<dbReference type="GO" id="GO:0015086">
    <property type="term" value="F:cadmium ion transmembrane transporter activity"/>
    <property type="evidence" value="ECO:0000318"/>
    <property type="project" value="GO_Central"/>
</dbReference>
<dbReference type="GO" id="GO:0005381">
    <property type="term" value="F:iron ion transmembrane transporter activity"/>
    <property type="evidence" value="ECO:0000250"/>
    <property type="project" value="UniProtKB"/>
</dbReference>
<dbReference type="GO" id="GO:0005384">
    <property type="term" value="F:manganese ion transmembrane transporter activity"/>
    <property type="evidence" value="ECO:0000250"/>
    <property type="project" value="UniProtKB"/>
</dbReference>
<dbReference type="GO" id="GO:0051139">
    <property type="term" value="F:metal cation:proton antiporter activity"/>
    <property type="evidence" value="ECO:0000250"/>
    <property type="project" value="UniProtKB"/>
</dbReference>
<dbReference type="GO" id="GO:0042803">
    <property type="term" value="F:protein homodimerization activity"/>
    <property type="evidence" value="ECO:0000266"/>
    <property type="project" value="RGD"/>
</dbReference>
<dbReference type="GO" id="GO:0046915">
    <property type="term" value="F:transition metal ion transmembrane transporter activity"/>
    <property type="evidence" value="ECO:0000266"/>
    <property type="project" value="RGD"/>
</dbReference>
<dbReference type="GO" id="GO:0048002">
    <property type="term" value="P:antigen processing and presentation of peptide antigen"/>
    <property type="evidence" value="ECO:0000266"/>
    <property type="project" value="RGD"/>
</dbReference>
<dbReference type="GO" id="GO:0070574">
    <property type="term" value="P:cadmium ion transmembrane transport"/>
    <property type="evidence" value="ECO:0000266"/>
    <property type="project" value="RGD"/>
</dbReference>
<dbReference type="GO" id="GO:0098849">
    <property type="term" value="P:cellular detoxification of cadmium ion"/>
    <property type="evidence" value="ECO:0000266"/>
    <property type="project" value="RGD"/>
</dbReference>
<dbReference type="GO" id="GO:0042742">
    <property type="term" value="P:defense response to bacterium"/>
    <property type="evidence" value="ECO:0000266"/>
    <property type="project" value="RGD"/>
</dbReference>
<dbReference type="GO" id="GO:0050829">
    <property type="term" value="P:defense response to Gram-negative bacterium"/>
    <property type="evidence" value="ECO:0000266"/>
    <property type="project" value="RGD"/>
</dbReference>
<dbReference type="GO" id="GO:0042832">
    <property type="term" value="P:defense response to protozoan"/>
    <property type="evidence" value="ECO:0000266"/>
    <property type="project" value="RGD"/>
</dbReference>
<dbReference type="GO" id="GO:0051649">
    <property type="term" value="P:establishment of localization in cell"/>
    <property type="evidence" value="ECO:0000266"/>
    <property type="project" value="RGD"/>
</dbReference>
<dbReference type="GO" id="GO:0006954">
    <property type="term" value="P:inflammatory response"/>
    <property type="evidence" value="ECO:0000266"/>
    <property type="project" value="RGD"/>
</dbReference>
<dbReference type="GO" id="GO:0006879">
    <property type="term" value="P:intracellular iron ion homeostasis"/>
    <property type="evidence" value="ECO:0000266"/>
    <property type="project" value="RGD"/>
</dbReference>
<dbReference type="GO" id="GO:0034755">
    <property type="term" value="P:iron ion transmembrane transport"/>
    <property type="evidence" value="ECO:0000318"/>
    <property type="project" value="GO_Central"/>
</dbReference>
<dbReference type="GO" id="GO:0006826">
    <property type="term" value="P:iron ion transport"/>
    <property type="evidence" value="ECO:0000250"/>
    <property type="project" value="UniProtKB"/>
</dbReference>
<dbReference type="GO" id="GO:1903826">
    <property type="term" value="P:L-arginine transmembrane transport"/>
    <property type="evidence" value="ECO:0000266"/>
    <property type="project" value="RGD"/>
</dbReference>
<dbReference type="GO" id="GO:0042116">
    <property type="term" value="P:macrophage activation"/>
    <property type="evidence" value="ECO:0000266"/>
    <property type="project" value="RGD"/>
</dbReference>
<dbReference type="GO" id="GO:0006828">
    <property type="term" value="P:manganese ion transport"/>
    <property type="evidence" value="ECO:0000250"/>
    <property type="project" value="UniProtKB"/>
</dbReference>
<dbReference type="GO" id="GO:0000165">
    <property type="term" value="P:MAPK cascade"/>
    <property type="evidence" value="ECO:0000266"/>
    <property type="project" value="RGD"/>
</dbReference>
<dbReference type="GO" id="GO:0030001">
    <property type="term" value="P:metal ion transport"/>
    <property type="evidence" value="ECO:0000266"/>
    <property type="project" value="RGD"/>
</dbReference>
<dbReference type="GO" id="GO:0045342">
    <property type="term" value="P:MHC class II biosynthetic process"/>
    <property type="evidence" value="ECO:0000266"/>
    <property type="project" value="RGD"/>
</dbReference>
<dbReference type="GO" id="GO:0048255">
    <property type="term" value="P:mRNA stabilization"/>
    <property type="evidence" value="ECO:0000266"/>
    <property type="project" value="RGD"/>
</dbReference>
<dbReference type="GO" id="GO:0060586">
    <property type="term" value="P:multicellular organismal-level iron ion homeostasis"/>
    <property type="evidence" value="ECO:0000266"/>
    <property type="project" value="RGD"/>
</dbReference>
<dbReference type="GO" id="GO:0001818">
    <property type="term" value="P:negative regulation of cytokine production"/>
    <property type="evidence" value="ECO:0000266"/>
    <property type="project" value="RGD"/>
</dbReference>
<dbReference type="GO" id="GO:0015707">
    <property type="term" value="P:nitrite transport"/>
    <property type="evidence" value="ECO:0000266"/>
    <property type="project" value="RGD"/>
</dbReference>
<dbReference type="GO" id="GO:0006909">
    <property type="term" value="P:phagocytosis"/>
    <property type="evidence" value="ECO:0000266"/>
    <property type="project" value="RGD"/>
</dbReference>
<dbReference type="GO" id="GO:0001819">
    <property type="term" value="P:positive regulation of cytokine production"/>
    <property type="evidence" value="ECO:0000266"/>
    <property type="project" value="RGD"/>
</dbReference>
<dbReference type="GO" id="GO:0002606">
    <property type="term" value="P:positive regulation of dendritic cell antigen processing and presentation"/>
    <property type="evidence" value="ECO:0000266"/>
    <property type="project" value="RGD"/>
</dbReference>
<dbReference type="GO" id="GO:0010628">
    <property type="term" value="P:positive regulation of gene expression"/>
    <property type="evidence" value="ECO:0000266"/>
    <property type="project" value="RGD"/>
</dbReference>
<dbReference type="GO" id="GO:0050766">
    <property type="term" value="P:positive regulation of phagocytosis"/>
    <property type="evidence" value="ECO:0000266"/>
    <property type="project" value="RGD"/>
</dbReference>
<dbReference type="GO" id="GO:0002827">
    <property type="term" value="P:positive regulation of T-helper 1 type immune response"/>
    <property type="evidence" value="ECO:0000266"/>
    <property type="project" value="RGD"/>
</dbReference>
<dbReference type="GO" id="GO:0045944">
    <property type="term" value="P:positive regulation of transcription by RNA polymerase II"/>
    <property type="evidence" value="ECO:0000266"/>
    <property type="project" value="RGD"/>
</dbReference>
<dbReference type="GO" id="GO:0032729">
    <property type="term" value="P:positive regulation of type II interferon production"/>
    <property type="evidence" value="ECO:0000266"/>
    <property type="project" value="RGD"/>
</dbReference>
<dbReference type="GO" id="GO:0045730">
    <property type="term" value="P:respiratory burst"/>
    <property type="evidence" value="ECO:0000266"/>
    <property type="project" value="RGD"/>
</dbReference>
<dbReference type="GO" id="GO:0009617">
    <property type="term" value="P:response to bacterium"/>
    <property type="evidence" value="ECO:0000266"/>
    <property type="project" value="RGD"/>
</dbReference>
<dbReference type="GO" id="GO:0032496">
    <property type="term" value="P:response to lipopolysaccharide"/>
    <property type="evidence" value="ECO:0000266"/>
    <property type="project" value="RGD"/>
</dbReference>
<dbReference type="GO" id="GO:0034341">
    <property type="term" value="P:response to type II interferon"/>
    <property type="evidence" value="ECO:0000266"/>
    <property type="project" value="RGD"/>
</dbReference>
<dbReference type="GO" id="GO:0002309">
    <property type="term" value="P:T cell proliferation involved in immune response"/>
    <property type="evidence" value="ECO:0000266"/>
    <property type="project" value="RGD"/>
</dbReference>
<dbReference type="GO" id="GO:0007035">
    <property type="term" value="P:vacuolar acidification"/>
    <property type="evidence" value="ECO:0000266"/>
    <property type="project" value="RGD"/>
</dbReference>
<dbReference type="GO" id="GO:0042060">
    <property type="term" value="P:wound healing"/>
    <property type="evidence" value="ECO:0000266"/>
    <property type="project" value="RGD"/>
</dbReference>
<dbReference type="HAMAP" id="MF_00221">
    <property type="entry name" value="NRAMP"/>
    <property type="match status" value="1"/>
</dbReference>
<dbReference type="InterPro" id="IPR001046">
    <property type="entry name" value="NRAMP_fam"/>
</dbReference>
<dbReference type="NCBIfam" id="TIGR01197">
    <property type="entry name" value="nramp"/>
    <property type="match status" value="1"/>
</dbReference>
<dbReference type="NCBIfam" id="NF037982">
    <property type="entry name" value="Nramp_1"/>
    <property type="match status" value="1"/>
</dbReference>
<dbReference type="PANTHER" id="PTHR11706:SF52">
    <property type="entry name" value="NATURAL RESISTANCE-ASSOCIATED MACROPHAGE PROTEIN 1"/>
    <property type="match status" value="1"/>
</dbReference>
<dbReference type="PANTHER" id="PTHR11706">
    <property type="entry name" value="SOLUTE CARRIER PROTEIN FAMILY 11 MEMBER"/>
    <property type="match status" value="1"/>
</dbReference>
<dbReference type="Pfam" id="PF01566">
    <property type="entry name" value="Nramp"/>
    <property type="match status" value="1"/>
</dbReference>
<dbReference type="PRINTS" id="PR00447">
    <property type="entry name" value="NATRESASSCMP"/>
</dbReference>
<evidence type="ECO:0000250" key="1">
    <source>
        <dbReference type="UniProtKB" id="P49279"/>
    </source>
</evidence>
<evidence type="ECO:0000255" key="2"/>
<evidence type="ECO:0000256" key="3">
    <source>
        <dbReference type="SAM" id="MobiDB-lite"/>
    </source>
</evidence>
<evidence type="ECO:0000305" key="4"/>
<name>NRAM1_RAT</name>
<accession>P70553</accession>
<accession>Q496Z6</accession>
<keyword id="KW-0967">Endosome</keyword>
<keyword id="KW-0325">Glycoprotein</keyword>
<keyword id="KW-0406">Ion transport</keyword>
<keyword id="KW-0408">Iron</keyword>
<keyword id="KW-0410">Iron transport</keyword>
<keyword id="KW-0458">Lysosome</keyword>
<keyword id="KW-0472">Membrane</keyword>
<keyword id="KW-1185">Reference proteome</keyword>
<keyword id="KW-0812">Transmembrane</keyword>
<keyword id="KW-1133">Transmembrane helix</keyword>
<keyword id="KW-0813">Transport</keyword>
<organism>
    <name type="scientific">Rattus norvegicus</name>
    <name type="common">Rat</name>
    <dbReference type="NCBI Taxonomy" id="10116"/>
    <lineage>
        <taxon>Eukaryota</taxon>
        <taxon>Metazoa</taxon>
        <taxon>Chordata</taxon>
        <taxon>Craniata</taxon>
        <taxon>Vertebrata</taxon>
        <taxon>Euteleostomi</taxon>
        <taxon>Mammalia</taxon>
        <taxon>Eutheria</taxon>
        <taxon>Euarchontoglires</taxon>
        <taxon>Glires</taxon>
        <taxon>Rodentia</taxon>
        <taxon>Myomorpha</taxon>
        <taxon>Muroidea</taxon>
        <taxon>Muridae</taxon>
        <taxon>Murinae</taxon>
        <taxon>Rattus</taxon>
    </lineage>
</organism>
<sequence>MIRDKNPQRVNRPSYGSISSLPSPAPQPEPSRNTYLSEKIPIPSTEQLLWVLLWATVLGLLCQRLAARLGVVTGKDLGEICHLYYPKVPRILLWLTIELAIVGSDMQEVIGTAISFNLLSAGRIPLWGGVLITIVDTFFFLFLDNYGLRKLEAFFGFLVTIMALTFGYEYVVARPSQGALLKGLFLPSCPGCGQPELLQAVGIVGAIIMPHNIYLHSALVKSREVDRTRRGDVREANMYFLTEATIALFVSFIINLFVMAVFGQAFYQQTNEEAFNICANSSLHNYAKIFPRDNNTVSVDIYQGGVILGCLFGPAALYIWAVGLLAAGQSSTMTGTYAGQFVMEGFLKLRWSRFARVLLTRSCAILPTVLVAVFRDLRDLSGLNDLLNVLQSLLLPFAVLPILTFTSMPAVMQEFANGWLSKVITSCIMALVCAINLYFVISYLPSLPHPAYFGLVALLAIGYLGLTAYLAWTCCIAHGAKFLTHSSHQRFLYGLPIEEQEGREGSG</sequence>
<gene>
    <name type="primary">Slc11a1</name>
    <name type="synonym">Bcg</name>
    <name type="synonym">Nramp1</name>
</gene>
<feature type="chain" id="PRO_0000212591" description="Natural resistance-associated macrophage protein 1">
    <location>
        <begin position="1"/>
        <end position="507"/>
    </location>
</feature>
<feature type="topological domain" description="Cytoplasmic" evidence="2">
    <location>
        <begin position="1"/>
        <end position="39"/>
    </location>
</feature>
<feature type="transmembrane region" description="Helical" evidence="2">
    <location>
        <begin position="40"/>
        <end position="60"/>
    </location>
</feature>
<feature type="topological domain" description="Extracellular" evidence="2">
    <location>
        <begin position="61"/>
        <end position="123"/>
    </location>
</feature>
<feature type="transmembrane region" description="Helical" evidence="2">
    <location>
        <begin position="124"/>
        <end position="144"/>
    </location>
</feature>
<feature type="topological domain" description="Cytoplasmic" evidence="2">
    <location>
        <begin position="145"/>
        <end position="152"/>
    </location>
</feature>
<feature type="transmembrane region" description="Helical" evidence="2">
    <location>
        <begin position="153"/>
        <end position="173"/>
    </location>
</feature>
<feature type="topological domain" description="Extracellular" evidence="2">
    <location>
        <begin position="174"/>
        <end position="199"/>
    </location>
</feature>
<feature type="transmembrane region" description="Helical" evidence="2">
    <location>
        <begin position="200"/>
        <end position="220"/>
    </location>
</feature>
<feature type="topological domain" description="Cytoplasmic" evidence="2">
    <location>
        <begin position="221"/>
        <end position="245"/>
    </location>
</feature>
<feature type="transmembrane region" description="Helical" evidence="2">
    <location>
        <begin position="246"/>
        <end position="266"/>
    </location>
</feature>
<feature type="topological domain" description="Extracellular" evidence="2">
    <location>
        <begin position="267"/>
        <end position="305"/>
    </location>
</feature>
<feature type="transmembrane region" description="Helical" evidence="2">
    <location>
        <begin position="306"/>
        <end position="326"/>
    </location>
</feature>
<feature type="topological domain" description="Cytoplasmic" evidence="2">
    <location>
        <begin position="327"/>
        <end position="353"/>
    </location>
</feature>
<feature type="transmembrane region" description="Helical" evidence="2">
    <location>
        <begin position="354"/>
        <end position="374"/>
    </location>
</feature>
<feature type="topological domain" description="Extracellular" evidence="2">
    <location>
        <begin position="375"/>
        <end position="391"/>
    </location>
</feature>
<feature type="transmembrane region" description="Helical" evidence="2">
    <location>
        <begin position="392"/>
        <end position="412"/>
    </location>
</feature>
<feature type="topological domain" description="Cytoplasmic" evidence="2">
    <location>
        <begin position="413"/>
        <end position="422"/>
    </location>
</feature>
<feature type="transmembrane region" description="Helical" evidence="2">
    <location>
        <begin position="423"/>
        <end position="443"/>
    </location>
</feature>
<feature type="topological domain" description="Extracellular" evidence="2">
    <location>
        <begin position="444"/>
        <end position="451"/>
    </location>
</feature>
<feature type="transmembrane region" description="Helical" evidence="2">
    <location>
        <begin position="452"/>
        <end position="472"/>
    </location>
</feature>
<feature type="topological domain" description="Cytoplasmic" evidence="2">
    <location>
        <begin position="473"/>
        <end position="507"/>
    </location>
</feature>
<feature type="region of interest" description="Disordered" evidence="3">
    <location>
        <begin position="1"/>
        <end position="36"/>
    </location>
</feature>
<feature type="compositionally biased region" description="Polar residues" evidence="3">
    <location>
        <begin position="8"/>
        <end position="22"/>
    </location>
</feature>
<feature type="glycosylation site" description="N-linked (GlcNAc...) asparagine" evidence="2">
    <location>
        <position position="280"/>
    </location>
</feature>
<feature type="glycosylation site" description="N-linked (GlcNAc...) asparagine" evidence="2">
    <location>
        <position position="294"/>
    </location>
</feature>
<feature type="sequence conflict" description="In Ref. 2; AAB49833." evidence="4" ref="2">
    <original>T</original>
    <variation>S</variation>
    <location>
        <position position="404"/>
    </location>
</feature>
<feature type="sequence conflict" description="In Ref. 2; AAB49833." evidence="4" ref="2">
    <original>P</original>
    <variation>S</variation>
    <location>
        <position position="409"/>
    </location>
</feature>
<proteinExistence type="evidence at transcript level"/>